<gene>
    <name evidence="1" type="primary">uvrC</name>
    <name type="ordered locus">Fnod_0196</name>
</gene>
<accession>A7HJI0</accession>
<feature type="chain" id="PRO_1000099481" description="UvrABC system protein C">
    <location>
        <begin position="1"/>
        <end position="563"/>
    </location>
</feature>
<feature type="domain" description="GIY-YIG" evidence="1">
    <location>
        <begin position="12"/>
        <end position="87"/>
    </location>
</feature>
<feature type="domain" description="UVR" evidence="1">
    <location>
        <begin position="194"/>
        <end position="229"/>
    </location>
</feature>
<protein>
    <recommendedName>
        <fullName evidence="1">UvrABC system protein C</fullName>
        <shortName evidence="1">Protein UvrC</shortName>
    </recommendedName>
    <alternativeName>
        <fullName evidence="1">Excinuclease ABC subunit C</fullName>
    </alternativeName>
</protein>
<sequence>MLDFKILEKIPNKSGVYIFKKGEEYIYIGKAKELKKRLTSHFKAKDGKSKLIVEEADDLQVILLDNEKEALILEANMIYKYKPKYNAMLKDTQVYPYIRISNDEIPYLEIVRNRKGEGEFYGPFTNVYFTRQLFEVLRKVYKFRTCKRDITKLKKPCMDYHLGLCSGVCINEESPEDYKKKINEVKNVLKGKFSNVISFIKLKMEQHARLLDFENAAKYRDILLNFNKVMESQGVVLPESVNIDLVVGKHKTFLVFKIRSGYLISKLVYEYDGHIVDFIELFYTQNTSDIPEKIIVEKENKELKNIAKILGIKIAQAKDDLELQLLNKAIDNLNYEIGLILTNKIILKQMKELLGLMKLPNRIEGIDISHLAGKNTVASLVVFENGEIKKEEYRRYKLGDILDDFESIRIVVKKRYTKHNVPDLLFIDGGIGQVNAAYQSLKEIGKERECDVIGLAKEEETIVTLHGEIRLAFDHPVLRLLVKIRDETHRVANEFTRNLSTKKSLRSILDEIKWIGPKRKKTLLERYTSIEEILSVSRSEIEQLIGKKATESLLNELSYRRNL</sequence>
<comment type="function">
    <text evidence="1">The UvrABC repair system catalyzes the recognition and processing of DNA lesions. UvrC both incises the 5' and 3' sides of the lesion. The N-terminal half is responsible for the 3' incision and the C-terminal half is responsible for the 5' incision.</text>
</comment>
<comment type="subunit">
    <text evidence="1">Interacts with UvrB in an incision complex.</text>
</comment>
<comment type="subcellular location">
    <subcellularLocation>
        <location evidence="1">Cytoplasm</location>
    </subcellularLocation>
</comment>
<comment type="similarity">
    <text evidence="1">Belongs to the UvrC family.</text>
</comment>
<proteinExistence type="inferred from homology"/>
<organism>
    <name type="scientific">Fervidobacterium nodosum (strain ATCC 35602 / DSM 5306 / Rt17-B1)</name>
    <dbReference type="NCBI Taxonomy" id="381764"/>
    <lineage>
        <taxon>Bacteria</taxon>
        <taxon>Thermotogati</taxon>
        <taxon>Thermotogota</taxon>
        <taxon>Thermotogae</taxon>
        <taxon>Thermotogales</taxon>
        <taxon>Fervidobacteriaceae</taxon>
        <taxon>Fervidobacterium</taxon>
    </lineage>
</organism>
<evidence type="ECO:0000255" key="1">
    <source>
        <dbReference type="HAMAP-Rule" id="MF_00203"/>
    </source>
</evidence>
<dbReference type="EMBL" id="CP000771">
    <property type="protein sequence ID" value="ABS60063.1"/>
    <property type="molecule type" value="Genomic_DNA"/>
</dbReference>
<dbReference type="RefSeq" id="WP_011993386.1">
    <property type="nucleotide sequence ID" value="NC_009718.1"/>
</dbReference>
<dbReference type="SMR" id="A7HJI0"/>
<dbReference type="STRING" id="381764.Fnod_0196"/>
<dbReference type="KEGG" id="fno:Fnod_0196"/>
<dbReference type="eggNOG" id="COG0322">
    <property type="taxonomic scope" value="Bacteria"/>
</dbReference>
<dbReference type="HOGENOM" id="CLU_014841_3_2_0"/>
<dbReference type="OrthoDB" id="9804933at2"/>
<dbReference type="Proteomes" id="UP000002415">
    <property type="component" value="Chromosome"/>
</dbReference>
<dbReference type="GO" id="GO:0005737">
    <property type="term" value="C:cytoplasm"/>
    <property type="evidence" value="ECO:0007669"/>
    <property type="project" value="UniProtKB-SubCell"/>
</dbReference>
<dbReference type="GO" id="GO:0009380">
    <property type="term" value="C:excinuclease repair complex"/>
    <property type="evidence" value="ECO:0007669"/>
    <property type="project" value="InterPro"/>
</dbReference>
<dbReference type="GO" id="GO:0003677">
    <property type="term" value="F:DNA binding"/>
    <property type="evidence" value="ECO:0007669"/>
    <property type="project" value="UniProtKB-UniRule"/>
</dbReference>
<dbReference type="GO" id="GO:0009381">
    <property type="term" value="F:excinuclease ABC activity"/>
    <property type="evidence" value="ECO:0007669"/>
    <property type="project" value="UniProtKB-UniRule"/>
</dbReference>
<dbReference type="GO" id="GO:0006289">
    <property type="term" value="P:nucleotide-excision repair"/>
    <property type="evidence" value="ECO:0007669"/>
    <property type="project" value="UniProtKB-UniRule"/>
</dbReference>
<dbReference type="GO" id="GO:0009432">
    <property type="term" value="P:SOS response"/>
    <property type="evidence" value="ECO:0007669"/>
    <property type="project" value="UniProtKB-UniRule"/>
</dbReference>
<dbReference type="CDD" id="cd10434">
    <property type="entry name" value="GIY-YIG_UvrC_Cho"/>
    <property type="match status" value="1"/>
</dbReference>
<dbReference type="FunFam" id="3.40.1440.10:FF:000001">
    <property type="entry name" value="UvrABC system protein C"/>
    <property type="match status" value="1"/>
</dbReference>
<dbReference type="Gene3D" id="1.10.150.20">
    <property type="entry name" value="5' to 3' exonuclease, C-terminal subdomain"/>
    <property type="match status" value="1"/>
</dbReference>
<dbReference type="Gene3D" id="3.40.1440.10">
    <property type="entry name" value="GIY-YIG endonuclease"/>
    <property type="match status" value="1"/>
</dbReference>
<dbReference type="Gene3D" id="4.10.860.10">
    <property type="entry name" value="UVR domain"/>
    <property type="match status" value="1"/>
</dbReference>
<dbReference type="Gene3D" id="3.30.420.340">
    <property type="entry name" value="UvrC, RNAse H endonuclease domain"/>
    <property type="match status" value="1"/>
</dbReference>
<dbReference type="HAMAP" id="MF_00203">
    <property type="entry name" value="UvrC"/>
    <property type="match status" value="1"/>
</dbReference>
<dbReference type="InterPro" id="IPR000305">
    <property type="entry name" value="GIY-YIG_endonuc"/>
</dbReference>
<dbReference type="InterPro" id="IPR035901">
    <property type="entry name" value="GIY-YIG_endonuc_sf"/>
</dbReference>
<dbReference type="InterPro" id="IPR047296">
    <property type="entry name" value="GIY-YIG_UvrC_Cho"/>
</dbReference>
<dbReference type="InterPro" id="IPR010994">
    <property type="entry name" value="RuvA_2-like"/>
</dbReference>
<dbReference type="InterPro" id="IPR001943">
    <property type="entry name" value="UVR_dom"/>
</dbReference>
<dbReference type="InterPro" id="IPR036876">
    <property type="entry name" value="UVR_dom_sf"/>
</dbReference>
<dbReference type="InterPro" id="IPR050066">
    <property type="entry name" value="UvrABC_protein_C"/>
</dbReference>
<dbReference type="InterPro" id="IPR004791">
    <property type="entry name" value="UvrC"/>
</dbReference>
<dbReference type="InterPro" id="IPR001162">
    <property type="entry name" value="UvrC_RNase_H_dom"/>
</dbReference>
<dbReference type="InterPro" id="IPR038476">
    <property type="entry name" value="UvrC_RNase_H_dom_sf"/>
</dbReference>
<dbReference type="NCBIfam" id="TIGR00194">
    <property type="entry name" value="uvrC"/>
    <property type="match status" value="1"/>
</dbReference>
<dbReference type="PANTHER" id="PTHR30562:SF1">
    <property type="entry name" value="UVRABC SYSTEM PROTEIN C"/>
    <property type="match status" value="1"/>
</dbReference>
<dbReference type="PANTHER" id="PTHR30562">
    <property type="entry name" value="UVRC/OXIDOREDUCTASE"/>
    <property type="match status" value="1"/>
</dbReference>
<dbReference type="Pfam" id="PF01541">
    <property type="entry name" value="GIY-YIG"/>
    <property type="match status" value="1"/>
</dbReference>
<dbReference type="Pfam" id="PF02151">
    <property type="entry name" value="UVR"/>
    <property type="match status" value="1"/>
</dbReference>
<dbReference type="Pfam" id="PF08459">
    <property type="entry name" value="UvrC_RNaseH_dom"/>
    <property type="match status" value="1"/>
</dbReference>
<dbReference type="SMART" id="SM00465">
    <property type="entry name" value="GIYc"/>
    <property type="match status" value="1"/>
</dbReference>
<dbReference type="SUPFAM" id="SSF46600">
    <property type="entry name" value="C-terminal UvrC-binding domain of UvrB"/>
    <property type="match status" value="1"/>
</dbReference>
<dbReference type="SUPFAM" id="SSF82771">
    <property type="entry name" value="GIY-YIG endonuclease"/>
    <property type="match status" value="1"/>
</dbReference>
<dbReference type="SUPFAM" id="SSF47781">
    <property type="entry name" value="RuvA domain 2-like"/>
    <property type="match status" value="1"/>
</dbReference>
<dbReference type="PROSITE" id="PS50164">
    <property type="entry name" value="GIY_YIG"/>
    <property type="match status" value="1"/>
</dbReference>
<dbReference type="PROSITE" id="PS50151">
    <property type="entry name" value="UVR"/>
    <property type="match status" value="1"/>
</dbReference>
<dbReference type="PROSITE" id="PS50165">
    <property type="entry name" value="UVRC"/>
    <property type="match status" value="1"/>
</dbReference>
<keyword id="KW-0963">Cytoplasm</keyword>
<keyword id="KW-0227">DNA damage</keyword>
<keyword id="KW-0228">DNA excision</keyword>
<keyword id="KW-0234">DNA repair</keyword>
<keyword id="KW-0267">Excision nuclease</keyword>
<keyword id="KW-1185">Reference proteome</keyword>
<keyword id="KW-0742">SOS response</keyword>
<reference key="1">
    <citation type="submission" date="2007-07" db="EMBL/GenBank/DDBJ databases">
        <title>Complete sequence of Fervidobacterium nodosum Rt17-B1.</title>
        <authorList>
            <consortium name="US DOE Joint Genome Institute"/>
            <person name="Copeland A."/>
            <person name="Lucas S."/>
            <person name="Lapidus A."/>
            <person name="Barry K."/>
            <person name="Glavina del Rio T."/>
            <person name="Dalin E."/>
            <person name="Tice H."/>
            <person name="Pitluck S."/>
            <person name="Saunders E."/>
            <person name="Brettin T."/>
            <person name="Bruce D."/>
            <person name="Detter J.C."/>
            <person name="Han C."/>
            <person name="Schmutz J."/>
            <person name="Larimer F."/>
            <person name="Land M."/>
            <person name="Hauser L."/>
            <person name="Kyrpides N."/>
            <person name="Mikhailova N."/>
            <person name="Nelson K."/>
            <person name="Gogarten J.P."/>
            <person name="Noll K."/>
            <person name="Richardson P."/>
        </authorList>
    </citation>
    <scope>NUCLEOTIDE SEQUENCE [LARGE SCALE GENOMIC DNA]</scope>
    <source>
        <strain>ATCC 35602 / DSM 5306 / Rt17-B1</strain>
    </source>
</reference>
<name>UVRC_FERNB</name>